<evidence type="ECO:0000250" key="1"/>
<evidence type="ECO:0000269" key="2">
    <source>
    </source>
</evidence>
<evidence type="ECO:0000305" key="3"/>
<comment type="function">
    <text evidence="2">Mediates the conversion of 2-dehydro-3-deoxy-L-galactonate to pyruvate and L-glyceraldehyde in D-galacturonate catabolic process.</text>
</comment>
<comment type="catalytic activity">
    <reaction>
        <text>2-dehydro-3-deoxy-L-galactonate = L-glyceraldehyde + pyruvate</text>
        <dbReference type="Rhea" id="RHEA:38107"/>
        <dbReference type="ChEBI" id="CHEBI:15361"/>
        <dbReference type="ChEBI" id="CHEBI:27975"/>
        <dbReference type="ChEBI" id="CHEBI:75545"/>
        <dbReference type="EC" id="4.1.2.54"/>
    </reaction>
</comment>
<comment type="pathway">
    <text>Carbohydrate acid metabolism.</text>
</comment>
<comment type="similarity">
    <text evidence="3">Belongs to the DapA family.</text>
</comment>
<name>LGA1_ASPNG</name>
<keyword id="KW-0119">Carbohydrate metabolism</keyword>
<keyword id="KW-0456">Lyase</keyword>
<reference key="1">
    <citation type="journal article" date="2008" name="Fungal Genet. Biol.">
        <title>An evolutionary conserved d-galacturonic acid metabolic pathway operates across filamentous fungi capable of pectin degradation.</title>
        <authorList>
            <person name="Martens-Uzunova E.S."/>
            <person name="Schaap P.J."/>
        </authorList>
    </citation>
    <scope>NUCLEOTIDE SEQUENCE [GENOMIC DNA]</scope>
    <scope>FUNCTION</scope>
    <source>
        <strain>ATCC 9029 / NRRL 3 / CBS 120.49 / DSM 2466 / N400 / FGSC 732</strain>
    </source>
</reference>
<sequence>MPFTPLRPGVYAPTMTFFDPSTEDLDVPTIRKHAVRLAKAGLVGLVCMGSNGEAVHLTRAERKTVINETRSALVEAGFSNVPVIAGASEQSIRGTIELCKESYEAGAEYALIVPPSYYRYATGNDQTLYEFFTSVADGSPIPLILYNYPGAVAGIDMDSDLIIRISQHPNIVGTKFTCANTGKLTRVASALHAITPPSPLAPAQRKFPSTKTEANHPYVAFGGIADFSLQTLASGGSAILAGGANVIPKLCVQIFNLWSAGRFTEAMEAQELLSRADWVLTKAAIPGTKSAIQSYYGYGGFPRRPLARLSAEQAEAVAEKIKDAMEVEKSLPDIA</sequence>
<organism>
    <name type="scientific">Aspergillus niger</name>
    <dbReference type="NCBI Taxonomy" id="5061"/>
    <lineage>
        <taxon>Eukaryota</taxon>
        <taxon>Fungi</taxon>
        <taxon>Dikarya</taxon>
        <taxon>Ascomycota</taxon>
        <taxon>Pezizomycotina</taxon>
        <taxon>Eurotiomycetes</taxon>
        <taxon>Eurotiomycetidae</taxon>
        <taxon>Eurotiales</taxon>
        <taxon>Aspergillaceae</taxon>
        <taxon>Aspergillus</taxon>
        <taxon>Aspergillus subgen. Circumdati</taxon>
    </lineage>
</organism>
<feature type="chain" id="PRO_0000425570" description="L-threo-3-deoxy-hexylosonate aldolase">
    <location>
        <begin position="1"/>
        <end position="335"/>
    </location>
</feature>
<feature type="active site" description="Schiff-base intermediate with substrate" evidence="1">
    <location>
        <position position="175"/>
    </location>
</feature>
<feature type="binding site" evidence="1">
    <location>
        <begin position="50"/>
        <end position="51"/>
    </location>
    <ligand>
        <name>substrate</name>
    </ligand>
</feature>
<feature type="site" description="Involved in proton transfer during cleavage" evidence="1">
    <location>
        <position position="146"/>
    </location>
</feature>
<gene>
    <name type="primary">gaaC</name>
    <name type="synonym">lga1</name>
    <name type="ORF">An02g07720</name>
</gene>
<dbReference type="EC" id="4.1.2.54"/>
<dbReference type="EMBL" id="EF563988">
    <property type="protein sequence ID" value="ABQ53586.1"/>
    <property type="molecule type" value="Genomic_DNA"/>
</dbReference>
<dbReference type="SMR" id="A8DRH7"/>
<dbReference type="PaxDb" id="5061-CADANGAP00002225"/>
<dbReference type="VEuPathDB" id="FungiDB:An02g07720"/>
<dbReference type="VEuPathDB" id="FungiDB:ASPNIDRAFT2_1158310"/>
<dbReference type="VEuPathDB" id="FungiDB:ATCC64974_56460"/>
<dbReference type="VEuPathDB" id="FungiDB:M747DRAFT_280865"/>
<dbReference type="eggNOG" id="ENOG502QWNS">
    <property type="taxonomic scope" value="Eukaryota"/>
</dbReference>
<dbReference type="BRENDA" id="4.1.2.54">
    <property type="organism ID" value="518"/>
</dbReference>
<dbReference type="GO" id="GO:0008840">
    <property type="term" value="F:4-hydroxy-tetrahydrodipicolinate synthase activity"/>
    <property type="evidence" value="ECO:0007669"/>
    <property type="project" value="TreeGrafter"/>
</dbReference>
<dbReference type="CDD" id="cd00408">
    <property type="entry name" value="DHDPS-like"/>
    <property type="match status" value="1"/>
</dbReference>
<dbReference type="Gene3D" id="3.20.20.70">
    <property type="entry name" value="Aldolase class I"/>
    <property type="match status" value="1"/>
</dbReference>
<dbReference type="InterPro" id="IPR013785">
    <property type="entry name" value="Aldolase_TIM"/>
</dbReference>
<dbReference type="InterPro" id="IPR002220">
    <property type="entry name" value="DapA-like"/>
</dbReference>
<dbReference type="PANTHER" id="PTHR12128">
    <property type="entry name" value="DIHYDRODIPICOLINATE SYNTHASE"/>
    <property type="match status" value="1"/>
</dbReference>
<dbReference type="PANTHER" id="PTHR12128:SF24">
    <property type="entry name" value="DIHYDRODIPICOLINATE SYNTHETASE FAMILY PROTEIN (AFU_ORTHOLOGUE AFUA_3G11920)"/>
    <property type="match status" value="1"/>
</dbReference>
<dbReference type="Pfam" id="PF00701">
    <property type="entry name" value="DHDPS"/>
    <property type="match status" value="2"/>
</dbReference>
<dbReference type="PIRSF" id="PIRSF001365">
    <property type="entry name" value="DHDPS"/>
    <property type="match status" value="1"/>
</dbReference>
<dbReference type="PRINTS" id="PR00146">
    <property type="entry name" value="DHPICSNTHASE"/>
</dbReference>
<dbReference type="SMART" id="SM01130">
    <property type="entry name" value="DHDPS"/>
    <property type="match status" value="1"/>
</dbReference>
<dbReference type="SUPFAM" id="SSF51569">
    <property type="entry name" value="Aldolase"/>
    <property type="match status" value="1"/>
</dbReference>
<accession>A8DRH7</accession>
<protein>
    <recommendedName>
        <fullName>L-threo-3-deoxy-hexylosonate aldolase</fullName>
        <ecNumber>4.1.2.54</ecNumber>
    </recommendedName>
    <alternativeName>
        <fullName>L-threo-3-deoxy-hexulosonate aldolase</fullName>
    </alternativeName>
</protein>
<proteinExistence type="inferred from homology"/>